<feature type="signal peptide" evidence="2">
    <location>
        <begin position="1"/>
        <end position="34"/>
    </location>
</feature>
<feature type="propeptide" id="PRO_0000045182" evidence="1">
    <location>
        <begin position="35"/>
        <end position="290"/>
    </location>
</feature>
<feature type="chain" id="PRO_0000045183" description="Lipase 1">
    <location>
        <begin position="291"/>
        <end position="680"/>
    </location>
</feature>
<feature type="region of interest" description="Disordered" evidence="4">
    <location>
        <begin position="82"/>
        <end position="259"/>
    </location>
</feature>
<feature type="compositionally biased region" description="Basic and acidic residues" evidence="4">
    <location>
        <begin position="84"/>
        <end position="112"/>
    </location>
</feature>
<feature type="compositionally biased region" description="Polar residues" evidence="4">
    <location>
        <begin position="125"/>
        <end position="138"/>
    </location>
</feature>
<feature type="compositionally biased region" description="Low complexity" evidence="4">
    <location>
        <begin position="148"/>
        <end position="170"/>
    </location>
</feature>
<feature type="compositionally biased region" description="Polar residues" evidence="4">
    <location>
        <begin position="204"/>
        <end position="223"/>
    </location>
</feature>
<feature type="compositionally biased region" description="Basic and acidic residues" evidence="4">
    <location>
        <begin position="224"/>
        <end position="234"/>
    </location>
</feature>
<feature type="compositionally biased region" description="Polar residues" evidence="4">
    <location>
        <begin position="235"/>
        <end position="246"/>
    </location>
</feature>
<feature type="active site" description="Nucleophile" evidence="1">
    <location>
        <position position="408"/>
    </location>
</feature>
<feature type="active site" description="Charge relay system" evidence="3">
    <location>
        <position position="600"/>
    </location>
</feature>
<feature type="active site" description="Charge relay system" evidence="3">
    <location>
        <position position="639"/>
    </location>
</feature>
<feature type="binding site" evidence="1">
    <location>
        <position position="638"/>
    </location>
    <ligand>
        <name>Ca(2+)</name>
        <dbReference type="ChEBI" id="CHEBI:29108"/>
    </ligand>
</feature>
<feature type="binding site" evidence="1">
    <location>
        <position position="641"/>
    </location>
    <ligand>
        <name>Ca(2+)</name>
        <dbReference type="ChEBI" id="CHEBI:29108"/>
    </ligand>
</feature>
<feature type="binding site" evidence="1">
    <location>
        <position position="646"/>
    </location>
    <ligand>
        <name>Ca(2+)</name>
        <dbReference type="ChEBI" id="CHEBI:29108"/>
    </ligand>
</feature>
<feature type="binding site" evidence="1">
    <location>
        <position position="649"/>
    </location>
    <ligand>
        <name>Ca(2+)</name>
        <dbReference type="ChEBI" id="CHEBI:29108"/>
    </ligand>
</feature>
<gene>
    <name type="primary">lip1</name>
    <name type="ordered locus">SAS2556</name>
</gene>
<evidence type="ECO:0000250" key="1"/>
<evidence type="ECO:0000255" key="2"/>
<evidence type="ECO:0000255" key="3">
    <source>
        <dbReference type="PROSITE-ProRule" id="PRU10037"/>
    </source>
</evidence>
<evidence type="ECO:0000256" key="4">
    <source>
        <dbReference type="SAM" id="MobiDB-lite"/>
    </source>
</evidence>
<evidence type="ECO:0000305" key="5"/>
<accession>Q6G604</accession>
<comment type="catalytic activity">
    <reaction>
        <text>a triacylglycerol + H2O = a diacylglycerol + a fatty acid + H(+)</text>
        <dbReference type="Rhea" id="RHEA:12044"/>
        <dbReference type="ChEBI" id="CHEBI:15377"/>
        <dbReference type="ChEBI" id="CHEBI:15378"/>
        <dbReference type="ChEBI" id="CHEBI:17855"/>
        <dbReference type="ChEBI" id="CHEBI:18035"/>
        <dbReference type="ChEBI" id="CHEBI:28868"/>
        <dbReference type="EC" id="3.1.1.3"/>
    </reaction>
</comment>
<comment type="subcellular location">
    <subcellularLocation>
        <location evidence="1">Secreted</location>
    </subcellularLocation>
</comment>
<comment type="similarity">
    <text evidence="5">Belongs to the AB hydrolase superfamily. Lipase family.</text>
</comment>
<comment type="sequence caution" evidence="5">
    <conflict type="erroneous initiation">
        <sequence resource="EMBL-CDS" id="CAG44373"/>
    </conflict>
    <text>Extended N-terminus.</text>
</comment>
<dbReference type="EC" id="3.1.1.3"/>
<dbReference type="EMBL" id="BX571857">
    <property type="protein sequence ID" value="CAG44373.1"/>
    <property type="status" value="ALT_INIT"/>
    <property type="molecule type" value="Genomic_DNA"/>
</dbReference>
<dbReference type="RefSeq" id="WP_000842036.1">
    <property type="nucleotide sequence ID" value="NC_002953.3"/>
</dbReference>
<dbReference type="SMR" id="Q6G604"/>
<dbReference type="ESTHER" id="staau-LIP">
    <property type="family name" value="Bacterial_lip_FamI.6"/>
</dbReference>
<dbReference type="KEGG" id="sas:SAS2556"/>
<dbReference type="HOGENOM" id="CLU_023555_2_1_9"/>
<dbReference type="GO" id="GO:0005576">
    <property type="term" value="C:extracellular region"/>
    <property type="evidence" value="ECO:0007669"/>
    <property type="project" value="UniProtKB-SubCell"/>
</dbReference>
<dbReference type="GO" id="GO:0046872">
    <property type="term" value="F:metal ion binding"/>
    <property type="evidence" value="ECO:0007669"/>
    <property type="project" value="UniProtKB-KW"/>
</dbReference>
<dbReference type="GO" id="GO:0004806">
    <property type="term" value="F:triacylglycerol lipase activity"/>
    <property type="evidence" value="ECO:0007669"/>
    <property type="project" value="UniProtKB-EC"/>
</dbReference>
<dbReference type="GO" id="GO:0016042">
    <property type="term" value="P:lipid catabolic process"/>
    <property type="evidence" value="ECO:0007669"/>
    <property type="project" value="UniProtKB-KW"/>
</dbReference>
<dbReference type="Gene3D" id="3.40.50.1820">
    <property type="entry name" value="alpha/beta hydrolase"/>
    <property type="match status" value="1"/>
</dbReference>
<dbReference type="InterPro" id="IPR029058">
    <property type="entry name" value="AB_hydrolase_fold"/>
</dbReference>
<dbReference type="InterPro" id="IPR056304">
    <property type="entry name" value="Lip-like_C"/>
</dbReference>
<dbReference type="InterPro" id="IPR005877">
    <property type="entry name" value="YSIRK_signal_dom"/>
</dbReference>
<dbReference type="NCBIfam" id="NF047351">
    <property type="entry name" value="lipase_YSIRK_Sa"/>
    <property type="match status" value="1"/>
</dbReference>
<dbReference type="NCBIfam" id="TIGR01168">
    <property type="entry name" value="YSIRK_signal"/>
    <property type="match status" value="1"/>
</dbReference>
<dbReference type="PANTHER" id="PTHR34043">
    <property type="entry name" value="ALPHA/BETA-HYDROLASES SUPERFAMILY PROTEIN"/>
    <property type="match status" value="1"/>
</dbReference>
<dbReference type="PANTHER" id="PTHR34043:SF3">
    <property type="entry name" value="ALPHA_BETA-HYDROLASES SUPERFAMILY PROTEIN"/>
    <property type="match status" value="1"/>
</dbReference>
<dbReference type="Pfam" id="PF24708">
    <property type="entry name" value="Lip_C"/>
    <property type="match status" value="1"/>
</dbReference>
<dbReference type="Pfam" id="PF04650">
    <property type="entry name" value="YSIRK_signal"/>
    <property type="match status" value="1"/>
</dbReference>
<dbReference type="SUPFAM" id="SSF53474">
    <property type="entry name" value="alpha/beta-Hydrolases"/>
    <property type="match status" value="1"/>
</dbReference>
<dbReference type="PROSITE" id="PS00120">
    <property type="entry name" value="LIPASE_SER"/>
    <property type="match status" value="1"/>
</dbReference>
<proteinExistence type="inferred from homology"/>
<name>LIP1_STAAS</name>
<keyword id="KW-0106">Calcium</keyword>
<keyword id="KW-0378">Hydrolase</keyword>
<keyword id="KW-0442">Lipid degradation</keyword>
<keyword id="KW-0443">Lipid metabolism</keyword>
<keyword id="KW-0479">Metal-binding</keyword>
<keyword id="KW-0964">Secreted</keyword>
<keyword id="KW-0732">Signal</keyword>
<keyword id="KW-0865">Zymogen</keyword>
<reference key="1">
    <citation type="journal article" date="2004" name="Proc. Natl. Acad. Sci. U.S.A.">
        <title>Complete genomes of two clinical Staphylococcus aureus strains: evidence for the rapid evolution of virulence and drug resistance.</title>
        <authorList>
            <person name="Holden M.T.G."/>
            <person name="Feil E.J."/>
            <person name="Lindsay J.A."/>
            <person name="Peacock S.J."/>
            <person name="Day N.P.J."/>
            <person name="Enright M.C."/>
            <person name="Foster T.J."/>
            <person name="Moore C.E."/>
            <person name="Hurst L."/>
            <person name="Atkin R."/>
            <person name="Barron A."/>
            <person name="Bason N."/>
            <person name="Bentley S.D."/>
            <person name="Chillingworth C."/>
            <person name="Chillingworth T."/>
            <person name="Churcher C."/>
            <person name="Clark L."/>
            <person name="Corton C."/>
            <person name="Cronin A."/>
            <person name="Doggett J."/>
            <person name="Dowd L."/>
            <person name="Feltwell T."/>
            <person name="Hance Z."/>
            <person name="Harris B."/>
            <person name="Hauser H."/>
            <person name="Holroyd S."/>
            <person name="Jagels K."/>
            <person name="James K.D."/>
            <person name="Lennard N."/>
            <person name="Line A."/>
            <person name="Mayes R."/>
            <person name="Moule S."/>
            <person name="Mungall K."/>
            <person name="Ormond D."/>
            <person name="Quail M.A."/>
            <person name="Rabbinowitsch E."/>
            <person name="Rutherford K.M."/>
            <person name="Sanders M."/>
            <person name="Sharp S."/>
            <person name="Simmonds M."/>
            <person name="Stevens K."/>
            <person name="Whitehead S."/>
            <person name="Barrell B.G."/>
            <person name="Spratt B.G."/>
            <person name="Parkhill J."/>
        </authorList>
    </citation>
    <scope>NUCLEOTIDE SEQUENCE [LARGE SCALE GENOMIC DNA]</scope>
    <source>
        <strain>MSSA476</strain>
    </source>
</reference>
<organism>
    <name type="scientific">Staphylococcus aureus (strain MSSA476)</name>
    <dbReference type="NCBI Taxonomy" id="282459"/>
    <lineage>
        <taxon>Bacteria</taxon>
        <taxon>Bacillati</taxon>
        <taxon>Bacillota</taxon>
        <taxon>Bacilli</taxon>
        <taxon>Bacillales</taxon>
        <taxon>Staphylococcaceae</taxon>
        <taxon>Staphylococcus</taxon>
    </lineage>
</organism>
<protein>
    <recommendedName>
        <fullName>Lipase 1</fullName>
        <ecNumber>3.1.1.3</ecNumber>
    </recommendedName>
    <alternativeName>
        <fullName>Glycerol ester hydrolase 1</fullName>
    </alternativeName>
</protein>
<sequence length="680" mass="76675">MKSQNKYSIRKFSVGASSILIATLLFLSGGQAQAAEKQVNMGNSQEDTVTAQSIGDQQTRENANYQRENGVDEQQHTENLTKNLHNDKTISEENHRKTDDLNKDQLKDDKKSSLNNKNIQRDTTKNNNANPSDVNQGLEQAINDGKQSKVASQQQSKEADNSQDSNANNNLPSQSRIKEAPSLNKLDQTSQREIVNETEIEKVQPQQNNQANDKITNYNFNNEQEVKPQKDEKTLSVSDLKNNQKSPVEPTKDNDKKNGLNLLKSSAVATLPNKGTKELTAKAKDDQTNKVAKQGQYKNQDPIVLVHGFNGFTDDINPSVLAHYWGGNKMNIRQDLEENGYKAYEASISAFGSNYDRAVELYYYIKGGRVDYGAAHAAKYGHERYGKTYEGIYKDWKPGQKVHLVGHSMGGQTIRQLEELLRNGNREEIEYQKKHGGEISPLFKGNHDNMISSITTLGTPHNGTHASDLAGNEALVRQIVFDIGKMFGNKNSRVDFGLAQWGLKQKPNESYIDYVKRVKQSNLWKSKDNGFYDLTREGATDLNRKTSLNPNIVYKTYTGEATHKALNSDRQKADLNMFFPFVITGNLIGKATEKEWRENDGLVSVISSQHPFNQAYTKATDKIQKGIWQVTPTKHDWDHVDFVGQDSSDTVRTREELQDFWHHLADDLVKTEKLTDTKQA</sequence>